<reference key="1">
    <citation type="journal article" date="2007" name="Genome Biol.">
        <title>Characterization and modeling of the Haemophilus influenzae core and supragenomes based on the complete genomic sequences of Rd and 12 clinical nontypeable strains.</title>
        <authorList>
            <person name="Hogg J.S."/>
            <person name="Hu F.Z."/>
            <person name="Janto B."/>
            <person name="Boissy R."/>
            <person name="Hayes J."/>
            <person name="Keefe R."/>
            <person name="Post J.C."/>
            <person name="Ehrlich G.D."/>
        </authorList>
    </citation>
    <scope>NUCLEOTIDE SEQUENCE [LARGE SCALE GENOMIC DNA]</scope>
    <source>
        <strain>PittEE</strain>
    </source>
</reference>
<gene>
    <name evidence="1" type="primary">rpsJ</name>
    <name type="ordered locus">CGSHiEE_08185</name>
</gene>
<protein>
    <recommendedName>
        <fullName evidence="1">Small ribosomal subunit protein uS10</fullName>
    </recommendedName>
    <alternativeName>
        <fullName evidence="2">30S ribosomal protein S10</fullName>
    </alternativeName>
</protein>
<comment type="function">
    <text evidence="1">Involved in the binding of tRNA to the ribosomes.</text>
</comment>
<comment type="subunit">
    <text evidence="1">Part of the 30S ribosomal subunit.</text>
</comment>
<comment type="similarity">
    <text evidence="1">Belongs to the universal ribosomal protein uS10 family.</text>
</comment>
<sequence length="103" mass="11767">MQNQRIRIRLKAFDHRLIDQSTAEIVETAKRTGAQVRGPIPLPTRKERFTVLISPHVNKDARDQYEIRTHKRLVDIVEPTEKTVDALMRLDLAAGVDVQISLG</sequence>
<dbReference type="EMBL" id="CP000671">
    <property type="protein sequence ID" value="ABQ98948.1"/>
    <property type="molecule type" value="Genomic_DNA"/>
</dbReference>
<dbReference type="SMR" id="A5UDU7"/>
<dbReference type="KEGG" id="hip:CGSHiEE_08185"/>
<dbReference type="HOGENOM" id="CLU_122625_1_3_6"/>
<dbReference type="GO" id="GO:1990904">
    <property type="term" value="C:ribonucleoprotein complex"/>
    <property type="evidence" value="ECO:0007669"/>
    <property type="project" value="UniProtKB-KW"/>
</dbReference>
<dbReference type="GO" id="GO:0005840">
    <property type="term" value="C:ribosome"/>
    <property type="evidence" value="ECO:0007669"/>
    <property type="project" value="UniProtKB-KW"/>
</dbReference>
<dbReference type="GO" id="GO:0003735">
    <property type="term" value="F:structural constituent of ribosome"/>
    <property type="evidence" value="ECO:0007669"/>
    <property type="project" value="InterPro"/>
</dbReference>
<dbReference type="GO" id="GO:0000049">
    <property type="term" value="F:tRNA binding"/>
    <property type="evidence" value="ECO:0007669"/>
    <property type="project" value="UniProtKB-UniRule"/>
</dbReference>
<dbReference type="GO" id="GO:0006412">
    <property type="term" value="P:translation"/>
    <property type="evidence" value="ECO:0007669"/>
    <property type="project" value="UniProtKB-UniRule"/>
</dbReference>
<dbReference type="FunFam" id="3.30.70.600:FF:000001">
    <property type="entry name" value="30S ribosomal protein S10"/>
    <property type="match status" value="1"/>
</dbReference>
<dbReference type="Gene3D" id="3.30.70.600">
    <property type="entry name" value="Ribosomal protein S10 domain"/>
    <property type="match status" value="1"/>
</dbReference>
<dbReference type="HAMAP" id="MF_00508">
    <property type="entry name" value="Ribosomal_uS10"/>
    <property type="match status" value="1"/>
</dbReference>
<dbReference type="InterPro" id="IPR001848">
    <property type="entry name" value="Ribosomal_uS10"/>
</dbReference>
<dbReference type="InterPro" id="IPR018268">
    <property type="entry name" value="Ribosomal_uS10_CS"/>
</dbReference>
<dbReference type="InterPro" id="IPR027486">
    <property type="entry name" value="Ribosomal_uS10_dom"/>
</dbReference>
<dbReference type="InterPro" id="IPR036838">
    <property type="entry name" value="Ribosomal_uS10_dom_sf"/>
</dbReference>
<dbReference type="NCBIfam" id="NF001861">
    <property type="entry name" value="PRK00596.1"/>
    <property type="match status" value="1"/>
</dbReference>
<dbReference type="NCBIfam" id="TIGR01049">
    <property type="entry name" value="rpsJ_bact"/>
    <property type="match status" value="1"/>
</dbReference>
<dbReference type="PANTHER" id="PTHR11700">
    <property type="entry name" value="30S RIBOSOMAL PROTEIN S10 FAMILY MEMBER"/>
    <property type="match status" value="1"/>
</dbReference>
<dbReference type="Pfam" id="PF00338">
    <property type="entry name" value="Ribosomal_S10"/>
    <property type="match status" value="1"/>
</dbReference>
<dbReference type="PRINTS" id="PR00971">
    <property type="entry name" value="RIBOSOMALS10"/>
</dbReference>
<dbReference type="SMART" id="SM01403">
    <property type="entry name" value="Ribosomal_S10"/>
    <property type="match status" value="1"/>
</dbReference>
<dbReference type="SUPFAM" id="SSF54999">
    <property type="entry name" value="Ribosomal protein S10"/>
    <property type="match status" value="1"/>
</dbReference>
<dbReference type="PROSITE" id="PS00361">
    <property type="entry name" value="RIBOSOMAL_S10"/>
    <property type="match status" value="1"/>
</dbReference>
<proteinExistence type="inferred from homology"/>
<evidence type="ECO:0000255" key="1">
    <source>
        <dbReference type="HAMAP-Rule" id="MF_00508"/>
    </source>
</evidence>
<evidence type="ECO:0000305" key="2"/>
<feature type="chain" id="PRO_1000015030" description="Small ribosomal subunit protein uS10">
    <location>
        <begin position="1"/>
        <end position="103"/>
    </location>
</feature>
<organism>
    <name type="scientific">Haemophilus influenzae (strain PittEE)</name>
    <dbReference type="NCBI Taxonomy" id="374930"/>
    <lineage>
        <taxon>Bacteria</taxon>
        <taxon>Pseudomonadati</taxon>
        <taxon>Pseudomonadota</taxon>
        <taxon>Gammaproteobacteria</taxon>
        <taxon>Pasteurellales</taxon>
        <taxon>Pasteurellaceae</taxon>
        <taxon>Haemophilus</taxon>
    </lineage>
</organism>
<keyword id="KW-0687">Ribonucleoprotein</keyword>
<keyword id="KW-0689">Ribosomal protein</keyword>
<name>RS10_HAEIE</name>
<accession>A5UDU7</accession>